<sequence>MSEVILDLQVATENTQGLPSEAQFITWLEAVLPQFQPISEVTIRIVDEAESHELNLTYRGKDRPTNVLSFPFEAPPEVELPLLGDLIICRQVVEKEADEQNKTVEEHWAHMVIHGCLHLLGYDHIEDDEAEEMEGLETEILQKLGYEDPYLIEKE</sequence>
<evidence type="ECO:0000255" key="1">
    <source>
        <dbReference type="HAMAP-Rule" id="MF_00009"/>
    </source>
</evidence>
<name>YBEY_PROMH</name>
<gene>
    <name evidence="1" type="primary">ybeY</name>
    <name type="ordered locus">PMI0445</name>
</gene>
<reference key="1">
    <citation type="journal article" date="2008" name="J. Bacteriol.">
        <title>Complete genome sequence of uropathogenic Proteus mirabilis, a master of both adherence and motility.</title>
        <authorList>
            <person name="Pearson M.M."/>
            <person name="Sebaihia M."/>
            <person name="Churcher C."/>
            <person name="Quail M.A."/>
            <person name="Seshasayee A.S."/>
            <person name="Luscombe N.M."/>
            <person name="Abdellah Z."/>
            <person name="Arrosmith C."/>
            <person name="Atkin B."/>
            <person name="Chillingworth T."/>
            <person name="Hauser H."/>
            <person name="Jagels K."/>
            <person name="Moule S."/>
            <person name="Mungall K."/>
            <person name="Norbertczak H."/>
            <person name="Rabbinowitsch E."/>
            <person name="Walker D."/>
            <person name="Whithead S."/>
            <person name="Thomson N.R."/>
            <person name="Rather P.N."/>
            <person name="Parkhill J."/>
            <person name="Mobley H.L.T."/>
        </authorList>
    </citation>
    <scope>NUCLEOTIDE SEQUENCE [LARGE SCALE GENOMIC DNA]</scope>
    <source>
        <strain>HI4320</strain>
    </source>
</reference>
<accession>B4EV26</accession>
<dbReference type="EC" id="3.1.-.-" evidence="1"/>
<dbReference type="EMBL" id="AM942759">
    <property type="protein sequence ID" value="CAR41113.1"/>
    <property type="molecule type" value="Genomic_DNA"/>
</dbReference>
<dbReference type="RefSeq" id="WP_004246032.1">
    <property type="nucleotide sequence ID" value="NC_010554.1"/>
</dbReference>
<dbReference type="SMR" id="B4EV26"/>
<dbReference type="EnsemblBacteria" id="CAR41113">
    <property type="protein sequence ID" value="CAR41113"/>
    <property type="gene ID" value="PMI0445"/>
</dbReference>
<dbReference type="GeneID" id="6802614"/>
<dbReference type="KEGG" id="pmr:PMI0445"/>
<dbReference type="eggNOG" id="COG0319">
    <property type="taxonomic scope" value="Bacteria"/>
</dbReference>
<dbReference type="HOGENOM" id="CLU_106710_0_1_6"/>
<dbReference type="Proteomes" id="UP000008319">
    <property type="component" value="Chromosome"/>
</dbReference>
<dbReference type="GO" id="GO:0005737">
    <property type="term" value="C:cytoplasm"/>
    <property type="evidence" value="ECO:0007669"/>
    <property type="project" value="UniProtKB-SubCell"/>
</dbReference>
<dbReference type="GO" id="GO:0004222">
    <property type="term" value="F:metalloendopeptidase activity"/>
    <property type="evidence" value="ECO:0007669"/>
    <property type="project" value="InterPro"/>
</dbReference>
<dbReference type="GO" id="GO:0004521">
    <property type="term" value="F:RNA endonuclease activity"/>
    <property type="evidence" value="ECO:0007669"/>
    <property type="project" value="UniProtKB-UniRule"/>
</dbReference>
<dbReference type="GO" id="GO:0008270">
    <property type="term" value="F:zinc ion binding"/>
    <property type="evidence" value="ECO:0007669"/>
    <property type="project" value="UniProtKB-UniRule"/>
</dbReference>
<dbReference type="GO" id="GO:0006364">
    <property type="term" value="P:rRNA processing"/>
    <property type="evidence" value="ECO:0007669"/>
    <property type="project" value="UniProtKB-UniRule"/>
</dbReference>
<dbReference type="Gene3D" id="3.40.390.30">
    <property type="entry name" value="Metalloproteases ('zincins'), catalytic domain"/>
    <property type="match status" value="1"/>
</dbReference>
<dbReference type="HAMAP" id="MF_00009">
    <property type="entry name" value="Endoribonucl_YbeY"/>
    <property type="match status" value="1"/>
</dbReference>
<dbReference type="InterPro" id="IPR023091">
    <property type="entry name" value="MetalPrtase_cat_dom_sf_prd"/>
</dbReference>
<dbReference type="InterPro" id="IPR002036">
    <property type="entry name" value="YbeY"/>
</dbReference>
<dbReference type="InterPro" id="IPR020549">
    <property type="entry name" value="YbeY_CS"/>
</dbReference>
<dbReference type="NCBIfam" id="TIGR00043">
    <property type="entry name" value="rRNA maturation RNase YbeY"/>
    <property type="match status" value="1"/>
</dbReference>
<dbReference type="PANTHER" id="PTHR46986">
    <property type="entry name" value="ENDORIBONUCLEASE YBEY, CHLOROPLASTIC"/>
    <property type="match status" value="1"/>
</dbReference>
<dbReference type="PANTHER" id="PTHR46986:SF1">
    <property type="entry name" value="ENDORIBONUCLEASE YBEY, CHLOROPLASTIC"/>
    <property type="match status" value="1"/>
</dbReference>
<dbReference type="Pfam" id="PF02130">
    <property type="entry name" value="YbeY"/>
    <property type="match status" value="1"/>
</dbReference>
<dbReference type="SUPFAM" id="SSF55486">
    <property type="entry name" value="Metalloproteases ('zincins'), catalytic domain"/>
    <property type="match status" value="1"/>
</dbReference>
<dbReference type="PROSITE" id="PS01306">
    <property type="entry name" value="UPF0054"/>
    <property type="match status" value="1"/>
</dbReference>
<protein>
    <recommendedName>
        <fullName evidence="1">Endoribonuclease YbeY</fullName>
        <ecNumber evidence="1">3.1.-.-</ecNumber>
    </recommendedName>
</protein>
<feature type="chain" id="PRO_1000089197" description="Endoribonuclease YbeY">
    <location>
        <begin position="1"/>
        <end position="155"/>
    </location>
</feature>
<feature type="binding site" evidence="1">
    <location>
        <position position="114"/>
    </location>
    <ligand>
        <name>Zn(2+)</name>
        <dbReference type="ChEBI" id="CHEBI:29105"/>
        <note>catalytic</note>
    </ligand>
</feature>
<feature type="binding site" evidence="1">
    <location>
        <position position="118"/>
    </location>
    <ligand>
        <name>Zn(2+)</name>
        <dbReference type="ChEBI" id="CHEBI:29105"/>
        <note>catalytic</note>
    </ligand>
</feature>
<feature type="binding site" evidence="1">
    <location>
        <position position="124"/>
    </location>
    <ligand>
        <name>Zn(2+)</name>
        <dbReference type="ChEBI" id="CHEBI:29105"/>
        <note>catalytic</note>
    </ligand>
</feature>
<comment type="function">
    <text evidence="1">Single strand-specific metallo-endoribonuclease involved in late-stage 70S ribosome quality control and in maturation of the 3' terminus of the 16S rRNA.</text>
</comment>
<comment type="cofactor">
    <cofactor evidence="1">
        <name>Zn(2+)</name>
        <dbReference type="ChEBI" id="CHEBI:29105"/>
    </cofactor>
    <text evidence="1">Binds 1 zinc ion.</text>
</comment>
<comment type="subcellular location">
    <subcellularLocation>
        <location evidence="1">Cytoplasm</location>
    </subcellularLocation>
</comment>
<comment type="similarity">
    <text evidence="1">Belongs to the endoribonuclease YbeY family.</text>
</comment>
<proteinExistence type="inferred from homology"/>
<organism>
    <name type="scientific">Proteus mirabilis (strain HI4320)</name>
    <dbReference type="NCBI Taxonomy" id="529507"/>
    <lineage>
        <taxon>Bacteria</taxon>
        <taxon>Pseudomonadati</taxon>
        <taxon>Pseudomonadota</taxon>
        <taxon>Gammaproteobacteria</taxon>
        <taxon>Enterobacterales</taxon>
        <taxon>Morganellaceae</taxon>
        <taxon>Proteus</taxon>
    </lineage>
</organism>
<keyword id="KW-0963">Cytoplasm</keyword>
<keyword id="KW-0255">Endonuclease</keyword>
<keyword id="KW-0378">Hydrolase</keyword>
<keyword id="KW-0479">Metal-binding</keyword>
<keyword id="KW-0540">Nuclease</keyword>
<keyword id="KW-1185">Reference proteome</keyword>
<keyword id="KW-0690">Ribosome biogenesis</keyword>
<keyword id="KW-0698">rRNA processing</keyword>
<keyword id="KW-0862">Zinc</keyword>